<evidence type="ECO:0000250" key="1"/>
<evidence type="ECO:0000250" key="2">
    <source>
        <dbReference type="UniProtKB" id="Q9H310"/>
    </source>
</evidence>
<evidence type="ECO:0000255" key="3"/>
<evidence type="ECO:0000256" key="4">
    <source>
        <dbReference type="SAM" id="MobiDB-lite"/>
    </source>
</evidence>
<evidence type="ECO:0000305" key="5"/>
<name>RHBG_PANTR</name>
<protein>
    <recommendedName>
        <fullName>Ammonium transporter Rh type B</fullName>
    </recommendedName>
    <alternativeName>
        <fullName>Rhesus blood group family type B glycoprotein</fullName>
        <shortName>Rh family type B glycoprotein</shortName>
        <shortName>Rh type B glycoprotein</shortName>
    </alternativeName>
</protein>
<feature type="chain" id="PRO_0000283600" description="Ammonium transporter Rh type B">
    <location>
        <begin position="1"/>
        <end position="458"/>
    </location>
</feature>
<feature type="topological domain" description="Cytoplasmic" evidence="3">
    <location>
        <begin position="1"/>
        <end position="13"/>
    </location>
</feature>
<feature type="transmembrane region" description="Helical" evidence="3">
    <location>
        <begin position="14"/>
        <end position="34"/>
    </location>
</feature>
<feature type="topological domain" description="Extracellular" evidence="3">
    <location>
        <begin position="35"/>
        <end position="61"/>
    </location>
</feature>
<feature type="transmembrane region" description="Helical" evidence="3">
    <location>
        <begin position="62"/>
        <end position="82"/>
    </location>
</feature>
<feature type="topological domain" description="Cytoplasmic" evidence="3">
    <location>
        <begin position="83"/>
        <end position="86"/>
    </location>
</feature>
<feature type="transmembrane region" description="Helical" evidence="3">
    <location>
        <begin position="87"/>
        <end position="107"/>
    </location>
</feature>
<feature type="topological domain" description="Extracellular" evidence="3">
    <location>
        <begin position="108"/>
        <end position="124"/>
    </location>
</feature>
<feature type="transmembrane region" description="Helical" evidence="3">
    <location>
        <begin position="125"/>
        <end position="145"/>
    </location>
</feature>
<feature type="topological domain" description="Cytoplasmic" evidence="3">
    <location>
        <begin position="146"/>
        <end position="149"/>
    </location>
</feature>
<feature type="transmembrane region" description="Helical" evidence="3">
    <location>
        <begin position="150"/>
        <end position="170"/>
    </location>
</feature>
<feature type="topological domain" description="Extracellular" evidence="3">
    <location>
        <begin position="171"/>
        <end position="178"/>
    </location>
</feature>
<feature type="transmembrane region" description="Helical" evidence="3">
    <location>
        <begin position="179"/>
        <end position="201"/>
    </location>
</feature>
<feature type="topological domain" description="Cytoplasmic" evidence="3">
    <location>
        <begin position="202"/>
        <end position="219"/>
    </location>
</feature>
<feature type="transmembrane region" description="Helical" evidence="3">
    <location>
        <begin position="220"/>
        <end position="240"/>
    </location>
</feature>
<feature type="topological domain" description="Extracellular" evidence="3">
    <location>
        <begin position="241"/>
        <end position="251"/>
    </location>
</feature>
<feature type="transmembrane region" description="Helical" evidence="3">
    <location>
        <begin position="252"/>
        <end position="272"/>
    </location>
</feature>
<feature type="topological domain" description="Cytoplasmic" evidence="3">
    <location>
        <begin position="273"/>
        <end position="282"/>
    </location>
</feature>
<feature type="transmembrane region" description="Helical" evidence="3">
    <location>
        <begin position="283"/>
        <end position="303"/>
    </location>
</feature>
<feature type="topological domain" description="Extracellular" evidence="3">
    <location>
        <position position="304"/>
    </location>
</feature>
<feature type="transmembrane region" description="Helical" evidence="3">
    <location>
        <begin position="305"/>
        <end position="325"/>
    </location>
</feature>
<feature type="topological domain" description="Cytoplasmic" evidence="3">
    <location>
        <begin position="326"/>
        <end position="346"/>
    </location>
</feature>
<feature type="transmembrane region" description="Helical" evidence="3">
    <location>
        <begin position="347"/>
        <end position="367"/>
    </location>
</feature>
<feature type="topological domain" description="Extracellular" evidence="3">
    <location>
        <begin position="368"/>
        <end position="393"/>
    </location>
</feature>
<feature type="transmembrane region" description="Helical" evidence="3">
    <location>
        <begin position="394"/>
        <end position="414"/>
    </location>
</feature>
<feature type="topological domain" description="Cytoplasmic" evidence="3">
    <location>
        <begin position="415"/>
        <end position="458"/>
    </location>
</feature>
<feature type="region of interest" description="Interaction with ANK3" evidence="1">
    <location>
        <begin position="416"/>
        <end position="424"/>
    </location>
</feature>
<feature type="region of interest" description="Disordered" evidence="4">
    <location>
        <begin position="439"/>
        <end position="458"/>
    </location>
</feature>
<feature type="short sequence motif" description="Basolateral sorting signal" evidence="1">
    <location>
        <begin position="429"/>
        <end position="432"/>
    </location>
</feature>
<feature type="glycosylation site" description="N-linked (GlcNAc...) asparagine" evidence="3">
    <location>
        <position position="49"/>
    </location>
</feature>
<gene>
    <name type="primary">RHBG</name>
</gene>
<organism>
    <name type="scientific">Pan troglodytes</name>
    <name type="common">Chimpanzee</name>
    <dbReference type="NCBI Taxonomy" id="9598"/>
    <lineage>
        <taxon>Eukaryota</taxon>
        <taxon>Metazoa</taxon>
        <taxon>Chordata</taxon>
        <taxon>Craniata</taxon>
        <taxon>Vertebrata</taxon>
        <taxon>Euteleostomi</taxon>
        <taxon>Mammalia</taxon>
        <taxon>Eutheria</taxon>
        <taxon>Euarchontoglires</taxon>
        <taxon>Primates</taxon>
        <taxon>Haplorrhini</taxon>
        <taxon>Catarrhini</taxon>
        <taxon>Hominidae</taxon>
        <taxon>Pan</taxon>
    </lineage>
</organism>
<reference key="1">
    <citation type="journal article" date="2001" name="Blood Cells Mol. Dis.">
        <title>New insights into the Rh superfamily of genes and proteins in erythroid cells and nonerythroid tissues.</title>
        <authorList>
            <person name="Huang C.-H."/>
            <person name="Liu P.Z."/>
        </authorList>
    </citation>
    <scope>NUCLEOTIDE SEQUENCE [GENOMIC DNA]</scope>
</reference>
<reference key="2">
    <citation type="journal article" date="2005" name="Proc. Natl. Acad. Sci. U.S.A.">
        <title>Evolutionary conservation and diversification of Rh family genes and proteins.</title>
        <authorList>
            <person name="Huang C.-H."/>
            <person name="Peng J."/>
        </authorList>
    </citation>
    <scope>NUCLEOTIDE SEQUENCE [MRNA]</scope>
    <source>
        <tissue>Kidney</tissue>
    </source>
</reference>
<proteinExistence type="evidence at transcript level"/>
<comment type="function">
    <text evidence="2">Ammonium transporter involved in the maintenance of acid-base homeostasis. Transports ammonium and its related derivative methylammonium across the basolateral plasma membrane of epithelial cells likely contributing to renal transepithelial ammonia transport and ammonia metabolism. May transport either NH4(+) or NH3 ammonia species predominantly mediating an electrogenic NH4(+) transport (By similarity). May act as a CO2 channel providing for renal acid secretion (By similarity).</text>
</comment>
<comment type="catalytic activity">
    <reaction evidence="2">
        <text>NH4(+)(in) = NH4(+)(out)</text>
        <dbReference type="Rhea" id="RHEA:28747"/>
        <dbReference type="ChEBI" id="CHEBI:28938"/>
    </reaction>
    <physiologicalReaction direction="left-to-right" evidence="2">
        <dbReference type="Rhea" id="RHEA:28748"/>
    </physiologicalReaction>
    <physiologicalReaction direction="right-to-left" evidence="2">
        <dbReference type="Rhea" id="RHEA:28749"/>
    </physiologicalReaction>
</comment>
<comment type="catalytic activity">
    <reaction evidence="2">
        <text>methylamine(out) = methylamine(in)</text>
        <dbReference type="Rhea" id="RHEA:74391"/>
        <dbReference type="ChEBI" id="CHEBI:59338"/>
    </reaction>
    <physiologicalReaction direction="left-to-right" evidence="2">
        <dbReference type="Rhea" id="RHEA:74392"/>
    </physiologicalReaction>
</comment>
<comment type="catalytic activity">
    <reaction evidence="2">
        <text>CO2(out) = CO2(in)</text>
        <dbReference type="Rhea" id="RHEA:74891"/>
        <dbReference type="ChEBI" id="CHEBI:16526"/>
    </reaction>
    <physiologicalReaction direction="left-to-right" evidence="2">
        <dbReference type="Rhea" id="RHEA:74892"/>
    </physiologicalReaction>
</comment>
<comment type="subunit">
    <text evidence="2">Interacts (via C-terminus) with ANK2 and ANK3; required for targeting to the basolateral membrane.</text>
</comment>
<comment type="subcellular location">
    <subcellularLocation>
        <location evidence="2">Cell membrane</location>
        <topology evidence="2">Multi-pass membrane protein</topology>
    </subcellularLocation>
    <subcellularLocation>
        <location evidence="2">Basolateral cell membrane</location>
        <topology evidence="3">Multi-pass membrane protein</topology>
    </subcellularLocation>
</comment>
<comment type="PTM">
    <text evidence="1">N-glycosylated.</text>
</comment>
<comment type="similarity">
    <text evidence="5">Belongs to the ammonium transporter (TC 2.A.49) family. Rh subfamily.</text>
</comment>
<dbReference type="EMBL" id="AY013268">
    <property type="protein sequence ID" value="AAK15395.1"/>
    <property type="molecule type" value="Genomic_DNA"/>
</dbReference>
<dbReference type="EMBL" id="AY013264">
    <property type="protein sequence ID" value="AAK15395.1"/>
    <property type="status" value="JOINED"/>
    <property type="molecule type" value="Genomic_DNA"/>
</dbReference>
<dbReference type="EMBL" id="AY013265">
    <property type="protein sequence ID" value="AAK15395.1"/>
    <property type="status" value="JOINED"/>
    <property type="molecule type" value="Genomic_DNA"/>
</dbReference>
<dbReference type="EMBL" id="AY013266">
    <property type="protein sequence ID" value="AAK15395.1"/>
    <property type="status" value="JOINED"/>
    <property type="molecule type" value="Genomic_DNA"/>
</dbReference>
<dbReference type="EMBL" id="AY013267">
    <property type="protein sequence ID" value="AAK15395.1"/>
    <property type="status" value="JOINED"/>
    <property type="molecule type" value="Genomic_DNA"/>
</dbReference>
<dbReference type="EMBL" id="AY831674">
    <property type="protein sequence ID" value="AAX39716.1"/>
    <property type="molecule type" value="mRNA"/>
</dbReference>
<dbReference type="RefSeq" id="NP_001009091.1">
    <property type="nucleotide sequence ID" value="NM_001009091.2"/>
</dbReference>
<dbReference type="SMR" id="Q95M74"/>
<dbReference type="FunCoup" id="Q95M74">
    <property type="interactions" value="52"/>
</dbReference>
<dbReference type="STRING" id="9598.ENSPTRP00000054083"/>
<dbReference type="GlyCosmos" id="Q95M74">
    <property type="glycosylation" value="1 site, No reported glycans"/>
</dbReference>
<dbReference type="PaxDb" id="9598-ENSPTRP00000054083"/>
<dbReference type="Ensembl" id="ENSPTRT00000061546.3">
    <property type="protein sequence ID" value="ENSPTRP00000054083.3"/>
    <property type="gene ID" value="ENSPTRG00000001458.6"/>
</dbReference>
<dbReference type="GeneID" id="457394"/>
<dbReference type="KEGG" id="ptr:457394"/>
<dbReference type="CTD" id="57127"/>
<dbReference type="VGNC" id="VGNC:10035">
    <property type="gene designation" value="RHBG"/>
</dbReference>
<dbReference type="eggNOG" id="KOG3796">
    <property type="taxonomic scope" value="Eukaryota"/>
</dbReference>
<dbReference type="GeneTree" id="ENSGT00950000182844"/>
<dbReference type="InParanoid" id="Q95M74"/>
<dbReference type="OMA" id="DNIYWEV"/>
<dbReference type="OrthoDB" id="13530at9604"/>
<dbReference type="Proteomes" id="UP000002277">
    <property type="component" value="Chromosome 1"/>
</dbReference>
<dbReference type="Bgee" id="ENSPTRG00000001458">
    <property type="expression patterns" value="Expressed in cerebellar cortex and 6 other cell types or tissues"/>
</dbReference>
<dbReference type="GO" id="GO:0016323">
    <property type="term" value="C:basolateral plasma membrane"/>
    <property type="evidence" value="ECO:0000250"/>
    <property type="project" value="UniProtKB"/>
</dbReference>
<dbReference type="GO" id="GO:0005886">
    <property type="term" value="C:plasma membrane"/>
    <property type="evidence" value="ECO:0000318"/>
    <property type="project" value="GO_Central"/>
</dbReference>
<dbReference type="GO" id="GO:0014731">
    <property type="term" value="C:spectrin-associated cytoskeleton"/>
    <property type="evidence" value="ECO:0000250"/>
    <property type="project" value="UniProtKB"/>
</dbReference>
<dbReference type="GO" id="GO:0008519">
    <property type="term" value="F:ammonium channel activity"/>
    <property type="evidence" value="ECO:0000250"/>
    <property type="project" value="UniProtKB"/>
</dbReference>
<dbReference type="GO" id="GO:0030506">
    <property type="term" value="F:ankyrin binding"/>
    <property type="evidence" value="ECO:0007669"/>
    <property type="project" value="Ensembl"/>
</dbReference>
<dbReference type="GO" id="GO:0035379">
    <property type="term" value="F:carbon dioxide transmembrane transporter activity"/>
    <property type="evidence" value="ECO:0000250"/>
    <property type="project" value="UniProtKB"/>
</dbReference>
<dbReference type="GO" id="GO:0097272">
    <property type="term" value="P:ammonium homeostasis"/>
    <property type="evidence" value="ECO:0000318"/>
    <property type="project" value="GO_Central"/>
</dbReference>
<dbReference type="GO" id="GO:0072488">
    <property type="term" value="P:ammonium transmembrane transport"/>
    <property type="evidence" value="ECO:0000250"/>
    <property type="project" value="UniProtKB"/>
</dbReference>
<dbReference type="GO" id="GO:0070634">
    <property type="term" value="P:transepithelial ammonium transport"/>
    <property type="evidence" value="ECO:0007669"/>
    <property type="project" value="Ensembl"/>
</dbReference>
<dbReference type="FunFam" id="1.10.3430.10:FF:000001">
    <property type="entry name" value="Ammonium transporter Rh type C"/>
    <property type="match status" value="1"/>
</dbReference>
<dbReference type="Gene3D" id="1.10.3430.10">
    <property type="entry name" value="Ammonium transporter AmtB like domains"/>
    <property type="match status" value="1"/>
</dbReference>
<dbReference type="InterPro" id="IPR029020">
    <property type="entry name" value="Ammonium/urea_transptr"/>
</dbReference>
<dbReference type="InterPro" id="IPR024041">
    <property type="entry name" value="NH4_transpt_AmtB-like_dom"/>
</dbReference>
<dbReference type="InterPro" id="IPR002229">
    <property type="entry name" value="RhesusRHD"/>
</dbReference>
<dbReference type="PANTHER" id="PTHR11730">
    <property type="entry name" value="AMMONIUM TRANSPORTER"/>
    <property type="match status" value="1"/>
</dbReference>
<dbReference type="PANTHER" id="PTHR11730:SF42">
    <property type="entry name" value="AMMONIUM TRANSPORTER RH TYPE B"/>
    <property type="match status" value="1"/>
</dbReference>
<dbReference type="Pfam" id="PF00909">
    <property type="entry name" value="Ammonium_transp"/>
    <property type="match status" value="1"/>
</dbReference>
<dbReference type="PRINTS" id="PR00342">
    <property type="entry name" value="RHESUSRHD"/>
</dbReference>
<dbReference type="SUPFAM" id="SSF111352">
    <property type="entry name" value="Ammonium transporter"/>
    <property type="match status" value="1"/>
</dbReference>
<sequence length="458" mass="49502">MAGSPSRAAGRRLQLPLLCLFLQGATAVLFAVFVRYNHKTDAALWHRSNHSNADNEFYFRYPSFQDVHAMVFVGFGFLMVFLQRYGFSSVGFTFLLAAFALQWSTLVQGFLHSFHGGHIHVGVESMINADFCAGAVLISFGAVLGKTGPAQLLLMALLEVVLFGINEFVLLHLLGVRDAGGSMTIHTFGAYFGLVLSRVLYRPQLEKSKHRQGSVYHSDLFAMIGTIFLWIFWPSFNAALTALGAGQHRTALNTYYSLAASTLGTFALSALVGEDGRLDMVHIQNAALAGGVVVGTSSEMMLTPFGALTAGFLAGTVSTLGYKFFRPILESKFKVQDTCGVHNLHGMPGVLGALLGVLVAGLATHEAYGDGLESVFPLIAEGQRSATSQAMHQLFGLFVTLMFASVGGGLGGLLLKLPFLDSPPDSQCYEDQVHWQVPGEHEDKAQRPLRVEEADTQA</sequence>
<accession>Q95M74</accession>
<keyword id="KW-0924">Ammonia transport</keyword>
<keyword id="KW-1003">Cell membrane</keyword>
<keyword id="KW-0325">Glycoprotein</keyword>
<keyword id="KW-0472">Membrane</keyword>
<keyword id="KW-1185">Reference proteome</keyword>
<keyword id="KW-0812">Transmembrane</keyword>
<keyword id="KW-1133">Transmembrane helix</keyword>
<keyword id="KW-0813">Transport</keyword>